<reference key="1">
    <citation type="journal article" date="2005" name="Nucleic Acids Res.">
        <title>Genome dynamics and diversity of Shigella species, the etiologic agents of bacillary dysentery.</title>
        <authorList>
            <person name="Yang F."/>
            <person name="Yang J."/>
            <person name="Zhang X."/>
            <person name="Chen L."/>
            <person name="Jiang Y."/>
            <person name="Yan Y."/>
            <person name="Tang X."/>
            <person name="Wang J."/>
            <person name="Xiong Z."/>
            <person name="Dong J."/>
            <person name="Xue Y."/>
            <person name="Zhu Y."/>
            <person name="Xu X."/>
            <person name="Sun L."/>
            <person name="Chen S."/>
            <person name="Nie H."/>
            <person name="Peng J."/>
            <person name="Xu J."/>
            <person name="Wang Y."/>
            <person name="Yuan Z."/>
            <person name="Wen Y."/>
            <person name="Yao Z."/>
            <person name="Shen Y."/>
            <person name="Qiang B."/>
            <person name="Hou Y."/>
            <person name="Yu J."/>
            <person name="Jin Q."/>
        </authorList>
    </citation>
    <scope>NUCLEOTIDE SEQUENCE [LARGE SCALE GENOMIC DNA]</scope>
    <source>
        <strain>Sd197</strain>
    </source>
</reference>
<name>SURE_SHIDS</name>
<evidence type="ECO:0000255" key="1">
    <source>
        <dbReference type="HAMAP-Rule" id="MF_00060"/>
    </source>
</evidence>
<comment type="function">
    <text evidence="1">Nucleotidase with a broad substrate specificity as it can dephosphorylate various ribo- and deoxyribonucleoside 5'-monophosphates and ribonucleoside 3'-monophosphates with highest affinity to 3'-AMP. Also hydrolyzes polyphosphate (exopolyphosphatase activity) with the preference for short-chain-length substrates (P20-25). Might be involved in the regulation of dNTP and NTP pools, and in the turnover of 3'-mononucleotides produced by numerous intracellular RNases (T1, T2, and F) during the degradation of various RNAs.</text>
</comment>
<comment type="catalytic activity">
    <reaction evidence="1">
        <text>a ribonucleoside 5'-phosphate + H2O = a ribonucleoside + phosphate</text>
        <dbReference type="Rhea" id="RHEA:12484"/>
        <dbReference type="ChEBI" id="CHEBI:15377"/>
        <dbReference type="ChEBI" id="CHEBI:18254"/>
        <dbReference type="ChEBI" id="CHEBI:43474"/>
        <dbReference type="ChEBI" id="CHEBI:58043"/>
        <dbReference type="EC" id="3.1.3.5"/>
    </reaction>
</comment>
<comment type="catalytic activity">
    <reaction evidence="1">
        <text>a ribonucleoside 3'-phosphate + H2O = a ribonucleoside + phosphate</text>
        <dbReference type="Rhea" id="RHEA:10144"/>
        <dbReference type="ChEBI" id="CHEBI:13197"/>
        <dbReference type="ChEBI" id="CHEBI:15377"/>
        <dbReference type="ChEBI" id="CHEBI:18254"/>
        <dbReference type="ChEBI" id="CHEBI:43474"/>
        <dbReference type="EC" id="3.1.3.6"/>
    </reaction>
</comment>
<comment type="catalytic activity">
    <reaction evidence="1">
        <text>[phosphate](n) + H2O = [phosphate](n-1) + phosphate + H(+)</text>
        <dbReference type="Rhea" id="RHEA:21528"/>
        <dbReference type="Rhea" id="RHEA-COMP:9859"/>
        <dbReference type="Rhea" id="RHEA-COMP:14279"/>
        <dbReference type="ChEBI" id="CHEBI:15377"/>
        <dbReference type="ChEBI" id="CHEBI:15378"/>
        <dbReference type="ChEBI" id="CHEBI:16838"/>
        <dbReference type="ChEBI" id="CHEBI:43474"/>
        <dbReference type="EC" id="3.6.1.11"/>
    </reaction>
</comment>
<comment type="cofactor">
    <cofactor evidence="1">
        <name>a divalent metal cation</name>
        <dbReference type="ChEBI" id="CHEBI:60240"/>
    </cofactor>
    <text evidence="1">Binds 1 divalent metal cation per subunit.</text>
</comment>
<comment type="subcellular location">
    <subcellularLocation>
        <location evidence="1">Cytoplasm</location>
    </subcellularLocation>
</comment>
<comment type="similarity">
    <text evidence="1">Belongs to the SurE nucleotidase family.</text>
</comment>
<sequence>MRILLSNDDGVHAPGIQTLAKALREFADVQVVAPDRNRSGASNSLTLESSLRTFTFENGDIAVQMGTPTDCVYLGVNALMRPRPDIVVSGINAGPNLGDDVIYSGTVAAAMEGRHFGFPALAVSLDGHNHYDTAAAVTCSILRALCEEPLRTGRILNINVPDLPLDQIKGIRVTRCGTRHPADQVIPQQDPRGNTLYWIGPPGGKCDAGPGTDFAAVDEGYVSITPLRVDLTAHSAQDVVSDWLNSVGVGTQW</sequence>
<keyword id="KW-0963">Cytoplasm</keyword>
<keyword id="KW-0378">Hydrolase</keyword>
<keyword id="KW-0479">Metal-binding</keyword>
<keyword id="KW-0547">Nucleotide-binding</keyword>
<keyword id="KW-1185">Reference proteome</keyword>
<organism>
    <name type="scientific">Shigella dysenteriae serotype 1 (strain Sd197)</name>
    <dbReference type="NCBI Taxonomy" id="300267"/>
    <lineage>
        <taxon>Bacteria</taxon>
        <taxon>Pseudomonadati</taxon>
        <taxon>Pseudomonadota</taxon>
        <taxon>Gammaproteobacteria</taxon>
        <taxon>Enterobacterales</taxon>
        <taxon>Enterobacteriaceae</taxon>
        <taxon>Shigella</taxon>
    </lineage>
</organism>
<feature type="chain" id="PRO_0000235650" description="5'/3'-nucleotidase SurE">
    <location>
        <begin position="1"/>
        <end position="253"/>
    </location>
</feature>
<feature type="binding site" evidence="1">
    <location>
        <position position="8"/>
    </location>
    <ligand>
        <name>a divalent metal cation</name>
        <dbReference type="ChEBI" id="CHEBI:60240"/>
    </ligand>
</feature>
<feature type="binding site" evidence="1">
    <location>
        <position position="9"/>
    </location>
    <ligand>
        <name>a divalent metal cation</name>
        <dbReference type="ChEBI" id="CHEBI:60240"/>
    </ligand>
</feature>
<feature type="binding site" evidence="1">
    <location>
        <position position="39"/>
    </location>
    <ligand>
        <name>a divalent metal cation</name>
        <dbReference type="ChEBI" id="CHEBI:60240"/>
    </ligand>
</feature>
<feature type="binding site" evidence="1">
    <location>
        <position position="92"/>
    </location>
    <ligand>
        <name>a divalent metal cation</name>
        <dbReference type="ChEBI" id="CHEBI:60240"/>
    </ligand>
</feature>
<protein>
    <recommendedName>
        <fullName evidence="1">5'/3'-nucleotidase SurE</fullName>
        <ecNumber evidence="1">3.1.3.5</ecNumber>
        <ecNumber evidence="1">3.1.3.6</ecNumber>
    </recommendedName>
    <alternativeName>
        <fullName evidence="1">Exopolyphosphatase</fullName>
        <ecNumber evidence="1">3.6.1.11</ecNumber>
    </alternativeName>
    <alternativeName>
        <fullName evidence="1">Nucleoside monophosphate phosphohydrolase</fullName>
    </alternativeName>
</protein>
<dbReference type="EC" id="3.1.3.5" evidence="1"/>
<dbReference type="EC" id="3.1.3.6" evidence="1"/>
<dbReference type="EC" id="3.6.1.11" evidence="1"/>
<dbReference type="EMBL" id="CP000034">
    <property type="protein sequence ID" value="ABB62969.1"/>
    <property type="molecule type" value="Genomic_DNA"/>
</dbReference>
<dbReference type="RefSeq" id="WP_005019613.1">
    <property type="nucleotide sequence ID" value="NC_007606.1"/>
</dbReference>
<dbReference type="RefSeq" id="YP_404460.1">
    <property type="nucleotide sequence ID" value="NC_007606.1"/>
</dbReference>
<dbReference type="SMR" id="Q32CI6"/>
<dbReference type="STRING" id="300267.SDY_2943"/>
<dbReference type="EnsemblBacteria" id="ABB62969">
    <property type="protein sequence ID" value="ABB62969"/>
    <property type="gene ID" value="SDY_2943"/>
</dbReference>
<dbReference type="KEGG" id="sdy:SDY_2943"/>
<dbReference type="PATRIC" id="fig|300267.13.peg.3535"/>
<dbReference type="HOGENOM" id="CLU_045192_1_2_6"/>
<dbReference type="Proteomes" id="UP000002716">
    <property type="component" value="Chromosome"/>
</dbReference>
<dbReference type="GO" id="GO:0005737">
    <property type="term" value="C:cytoplasm"/>
    <property type="evidence" value="ECO:0007669"/>
    <property type="project" value="UniProtKB-SubCell"/>
</dbReference>
<dbReference type="GO" id="GO:0008254">
    <property type="term" value="F:3'-nucleotidase activity"/>
    <property type="evidence" value="ECO:0007669"/>
    <property type="project" value="UniProtKB-UniRule"/>
</dbReference>
<dbReference type="GO" id="GO:0008253">
    <property type="term" value="F:5'-nucleotidase activity"/>
    <property type="evidence" value="ECO:0007669"/>
    <property type="project" value="UniProtKB-UniRule"/>
</dbReference>
<dbReference type="GO" id="GO:0004309">
    <property type="term" value="F:exopolyphosphatase activity"/>
    <property type="evidence" value="ECO:0007669"/>
    <property type="project" value="UniProtKB-UniRule"/>
</dbReference>
<dbReference type="GO" id="GO:0046872">
    <property type="term" value="F:metal ion binding"/>
    <property type="evidence" value="ECO:0007669"/>
    <property type="project" value="UniProtKB-UniRule"/>
</dbReference>
<dbReference type="GO" id="GO:0000166">
    <property type="term" value="F:nucleotide binding"/>
    <property type="evidence" value="ECO:0007669"/>
    <property type="project" value="UniProtKB-KW"/>
</dbReference>
<dbReference type="FunFam" id="3.40.1210.10:FF:000001">
    <property type="entry name" value="5'/3'-nucleotidase SurE"/>
    <property type="match status" value="1"/>
</dbReference>
<dbReference type="Gene3D" id="3.40.1210.10">
    <property type="entry name" value="Survival protein SurE-like phosphatase/nucleotidase"/>
    <property type="match status" value="1"/>
</dbReference>
<dbReference type="HAMAP" id="MF_00060">
    <property type="entry name" value="SurE"/>
    <property type="match status" value="1"/>
</dbReference>
<dbReference type="InterPro" id="IPR030048">
    <property type="entry name" value="SurE"/>
</dbReference>
<dbReference type="InterPro" id="IPR002828">
    <property type="entry name" value="SurE-like_Pase/nucleotidase"/>
</dbReference>
<dbReference type="InterPro" id="IPR036523">
    <property type="entry name" value="SurE-like_sf"/>
</dbReference>
<dbReference type="NCBIfam" id="NF001488">
    <property type="entry name" value="PRK00346.1-1"/>
    <property type="match status" value="1"/>
</dbReference>
<dbReference type="NCBIfam" id="NF001489">
    <property type="entry name" value="PRK00346.1-3"/>
    <property type="match status" value="1"/>
</dbReference>
<dbReference type="NCBIfam" id="NF001490">
    <property type="entry name" value="PRK00346.1-4"/>
    <property type="match status" value="1"/>
</dbReference>
<dbReference type="NCBIfam" id="TIGR00087">
    <property type="entry name" value="surE"/>
    <property type="match status" value="1"/>
</dbReference>
<dbReference type="PANTHER" id="PTHR30457">
    <property type="entry name" value="5'-NUCLEOTIDASE SURE"/>
    <property type="match status" value="1"/>
</dbReference>
<dbReference type="PANTHER" id="PTHR30457:SF12">
    <property type="entry name" value="5'_3'-NUCLEOTIDASE SURE"/>
    <property type="match status" value="1"/>
</dbReference>
<dbReference type="Pfam" id="PF01975">
    <property type="entry name" value="SurE"/>
    <property type="match status" value="1"/>
</dbReference>
<dbReference type="SUPFAM" id="SSF64167">
    <property type="entry name" value="SurE-like"/>
    <property type="match status" value="1"/>
</dbReference>
<proteinExistence type="inferred from homology"/>
<gene>
    <name evidence="1" type="primary">surE</name>
    <name type="ordered locus">SDY_2943</name>
</gene>
<accession>Q32CI6</accession>